<evidence type="ECO:0000255" key="1">
    <source>
        <dbReference type="HAMAP-Rule" id="MF_00041"/>
    </source>
</evidence>
<organism>
    <name type="scientific">Opitutus terrae (strain DSM 11246 / JCM 15787 / PB90-1)</name>
    <dbReference type="NCBI Taxonomy" id="452637"/>
    <lineage>
        <taxon>Bacteria</taxon>
        <taxon>Pseudomonadati</taxon>
        <taxon>Verrucomicrobiota</taxon>
        <taxon>Opitutia</taxon>
        <taxon>Opitutales</taxon>
        <taxon>Opitutaceae</taxon>
        <taxon>Opitutus</taxon>
    </lineage>
</organism>
<accession>B1ZSX8</accession>
<comment type="catalytic activity">
    <reaction evidence="1">
        <text>tRNA(Cys) + L-cysteine + ATP = L-cysteinyl-tRNA(Cys) + AMP + diphosphate</text>
        <dbReference type="Rhea" id="RHEA:17773"/>
        <dbReference type="Rhea" id="RHEA-COMP:9661"/>
        <dbReference type="Rhea" id="RHEA-COMP:9679"/>
        <dbReference type="ChEBI" id="CHEBI:30616"/>
        <dbReference type="ChEBI" id="CHEBI:33019"/>
        <dbReference type="ChEBI" id="CHEBI:35235"/>
        <dbReference type="ChEBI" id="CHEBI:78442"/>
        <dbReference type="ChEBI" id="CHEBI:78517"/>
        <dbReference type="ChEBI" id="CHEBI:456215"/>
        <dbReference type="EC" id="6.1.1.16"/>
    </reaction>
</comment>
<comment type="cofactor">
    <cofactor evidence="1">
        <name>Zn(2+)</name>
        <dbReference type="ChEBI" id="CHEBI:29105"/>
    </cofactor>
    <text evidence="1">Binds 1 zinc ion per subunit.</text>
</comment>
<comment type="subunit">
    <text evidence="1">Monomer.</text>
</comment>
<comment type="subcellular location">
    <subcellularLocation>
        <location evidence="1">Cytoplasm</location>
    </subcellularLocation>
</comment>
<comment type="similarity">
    <text evidence="1">Belongs to the class-I aminoacyl-tRNA synthetase family.</text>
</comment>
<reference key="1">
    <citation type="journal article" date="2011" name="J. Bacteriol.">
        <title>Genome sequence of the verrucomicrobium Opitutus terrae PB90-1, an abundant inhabitant of rice paddy soil ecosystems.</title>
        <authorList>
            <person name="van Passel M.W."/>
            <person name="Kant R."/>
            <person name="Palva A."/>
            <person name="Copeland A."/>
            <person name="Lucas S."/>
            <person name="Lapidus A."/>
            <person name="Glavina del Rio T."/>
            <person name="Pitluck S."/>
            <person name="Goltsman E."/>
            <person name="Clum A."/>
            <person name="Sun H."/>
            <person name="Schmutz J."/>
            <person name="Larimer F.W."/>
            <person name="Land M.L."/>
            <person name="Hauser L."/>
            <person name="Kyrpides N."/>
            <person name="Mikhailova N."/>
            <person name="Richardson P.P."/>
            <person name="Janssen P.H."/>
            <person name="de Vos W.M."/>
            <person name="Smidt H."/>
        </authorList>
    </citation>
    <scope>NUCLEOTIDE SEQUENCE [LARGE SCALE GENOMIC DNA]</scope>
    <source>
        <strain>DSM 11246 / JCM 15787 / PB90-1</strain>
    </source>
</reference>
<gene>
    <name evidence="1" type="primary">cysS</name>
    <name type="ordered locus">Oter_2485</name>
</gene>
<name>SYC_OPITP</name>
<proteinExistence type="inferred from homology"/>
<dbReference type="EC" id="6.1.1.16" evidence="1"/>
<dbReference type="EMBL" id="CP001032">
    <property type="protein sequence ID" value="ACB75767.1"/>
    <property type="molecule type" value="Genomic_DNA"/>
</dbReference>
<dbReference type="RefSeq" id="WP_012375302.1">
    <property type="nucleotide sequence ID" value="NC_010571.1"/>
</dbReference>
<dbReference type="SMR" id="B1ZSX8"/>
<dbReference type="STRING" id="452637.Oter_2485"/>
<dbReference type="KEGG" id="ote:Oter_2485"/>
<dbReference type="eggNOG" id="COG0215">
    <property type="taxonomic scope" value="Bacteria"/>
</dbReference>
<dbReference type="HOGENOM" id="CLU_013528_0_1_0"/>
<dbReference type="OrthoDB" id="9815130at2"/>
<dbReference type="Proteomes" id="UP000007013">
    <property type="component" value="Chromosome"/>
</dbReference>
<dbReference type="GO" id="GO:0005829">
    <property type="term" value="C:cytosol"/>
    <property type="evidence" value="ECO:0007669"/>
    <property type="project" value="TreeGrafter"/>
</dbReference>
<dbReference type="GO" id="GO:0005524">
    <property type="term" value="F:ATP binding"/>
    <property type="evidence" value="ECO:0007669"/>
    <property type="project" value="UniProtKB-UniRule"/>
</dbReference>
<dbReference type="GO" id="GO:0004817">
    <property type="term" value="F:cysteine-tRNA ligase activity"/>
    <property type="evidence" value="ECO:0007669"/>
    <property type="project" value="UniProtKB-UniRule"/>
</dbReference>
<dbReference type="GO" id="GO:0008270">
    <property type="term" value="F:zinc ion binding"/>
    <property type="evidence" value="ECO:0007669"/>
    <property type="project" value="UniProtKB-UniRule"/>
</dbReference>
<dbReference type="GO" id="GO:0006423">
    <property type="term" value="P:cysteinyl-tRNA aminoacylation"/>
    <property type="evidence" value="ECO:0007669"/>
    <property type="project" value="UniProtKB-UniRule"/>
</dbReference>
<dbReference type="CDD" id="cd00672">
    <property type="entry name" value="CysRS_core"/>
    <property type="match status" value="1"/>
</dbReference>
<dbReference type="Gene3D" id="1.20.120.1910">
    <property type="entry name" value="Cysteine-tRNA ligase, C-terminal anti-codon recognition domain"/>
    <property type="match status" value="1"/>
</dbReference>
<dbReference type="Gene3D" id="3.40.50.620">
    <property type="entry name" value="HUPs"/>
    <property type="match status" value="1"/>
</dbReference>
<dbReference type="HAMAP" id="MF_00041">
    <property type="entry name" value="Cys_tRNA_synth"/>
    <property type="match status" value="1"/>
</dbReference>
<dbReference type="InterPro" id="IPR015803">
    <property type="entry name" value="Cys-tRNA-ligase"/>
</dbReference>
<dbReference type="InterPro" id="IPR015273">
    <property type="entry name" value="Cys-tRNA-synt_Ia_DALR"/>
</dbReference>
<dbReference type="InterPro" id="IPR024909">
    <property type="entry name" value="Cys-tRNA/MSH_ligase"/>
</dbReference>
<dbReference type="InterPro" id="IPR014729">
    <property type="entry name" value="Rossmann-like_a/b/a_fold"/>
</dbReference>
<dbReference type="InterPro" id="IPR032678">
    <property type="entry name" value="tRNA-synt_1_cat_dom"/>
</dbReference>
<dbReference type="InterPro" id="IPR009080">
    <property type="entry name" value="tRNAsynth_Ia_anticodon-bd"/>
</dbReference>
<dbReference type="NCBIfam" id="TIGR00435">
    <property type="entry name" value="cysS"/>
    <property type="match status" value="1"/>
</dbReference>
<dbReference type="PANTHER" id="PTHR10890:SF3">
    <property type="entry name" value="CYSTEINE--TRNA LIGASE, CYTOPLASMIC"/>
    <property type="match status" value="1"/>
</dbReference>
<dbReference type="PANTHER" id="PTHR10890">
    <property type="entry name" value="CYSTEINYL-TRNA SYNTHETASE"/>
    <property type="match status" value="1"/>
</dbReference>
<dbReference type="Pfam" id="PF09190">
    <property type="entry name" value="DALR_2"/>
    <property type="match status" value="1"/>
</dbReference>
<dbReference type="Pfam" id="PF01406">
    <property type="entry name" value="tRNA-synt_1e"/>
    <property type="match status" value="1"/>
</dbReference>
<dbReference type="PRINTS" id="PR00983">
    <property type="entry name" value="TRNASYNTHCYS"/>
</dbReference>
<dbReference type="SUPFAM" id="SSF47323">
    <property type="entry name" value="Anticodon-binding domain of a subclass of class I aminoacyl-tRNA synthetases"/>
    <property type="match status" value="1"/>
</dbReference>
<dbReference type="SUPFAM" id="SSF52374">
    <property type="entry name" value="Nucleotidylyl transferase"/>
    <property type="match status" value="1"/>
</dbReference>
<keyword id="KW-0030">Aminoacyl-tRNA synthetase</keyword>
<keyword id="KW-0067">ATP-binding</keyword>
<keyword id="KW-0963">Cytoplasm</keyword>
<keyword id="KW-0436">Ligase</keyword>
<keyword id="KW-0479">Metal-binding</keyword>
<keyword id="KW-0547">Nucleotide-binding</keyword>
<keyword id="KW-0648">Protein biosynthesis</keyword>
<keyword id="KW-1185">Reference proteome</keyword>
<keyword id="KW-0862">Zinc</keyword>
<sequence>MALKLFDSLTRNLRELQPSHPDGVFRFYNCGPTVYAPAHIGNFRTFVVNDILRRMLELEFGAPKVKHVRNLTDVDDKTIKRARDEGRPLADVTRQWTDKFHADCAALNCLPPHIEPTATGHIREQVDMIDCLMQKGNAYRAADGSVYFKVSSFSDYGRLSRVKERELQIGSALAGKSQAVDADEKEDGSDFALWKAHKPDDGENSWDSPWGRGRPGWHIECSAMSKKHLGETIDLHTGGVDLLFPHHENEIAQSECCNGVQFSRHWYHSEHLLVDGKKMSKSLGNLYTLDDLKQKGFSPMAVRYALLSGHPRKQLNFTLDSLHAAEKALATLRAYRATLAAGGAAHHVFAPVIAALEDDLNTPAALGALFTIVNRGKGEADVESFDRVMFALGLKLDAPTAPKAEVPAEVTALAEKRWAAKQAKDFATADALRKEIAAAGWSMLDRKDGYSLEPAKK</sequence>
<protein>
    <recommendedName>
        <fullName evidence="1">Cysteine--tRNA ligase</fullName>
        <ecNumber evidence="1">6.1.1.16</ecNumber>
    </recommendedName>
    <alternativeName>
        <fullName evidence="1">Cysteinyl-tRNA synthetase</fullName>
        <shortName evidence="1">CysRS</shortName>
    </alternativeName>
</protein>
<feature type="chain" id="PRO_1000199082" description="Cysteine--tRNA ligase">
    <location>
        <begin position="1"/>
        <end position="457"/>
    </location>
</feature>
<feature type="short sequence motif" description="'HIGH' region">
    <location>
        <begin position="32"/>
        <end position="42"/>
    </location>
</feature>
<feature type="short sequence motif" description="'KMSKS' region">
    <location>
        <begin position="278"/>
        <end position="282"/>
    </location>
</feature>
<feature type="binding site" evidence="1">
    <location>
        <position position="30"/>
    </location>
    <ligand>
        <name>Zn(2+)</name>
        <dbReference type="ChEBI" id="CHEBI:29105"/>
    </ligand>
</feature>
<feature type="binding site" evidence="1">
    <location>
        <position position="221"/>
    </location>
    <ligand>
        <name>Zn(2+)</name>
        <dbReference type="ChEBI" id="CHEBI:29105"/>
    </ligand>
</feature>
<feature type="binding site" evidence="1">
    <location>
        <position position="246"/>
    </location>
    <ligand>
        <name>Zn(2+)</name>
        <dbReference type="ChEBI" id="CHEBI:29105"/>
    </ligand>
</feature>
<feature type="binding site" evidence="1">
    <location>
        <position position="250"/>
    </location>
    <ligand>
        <name>Zn(2+)</name>
        <dbReference type="ChEBI" id="CHEBI:29105"/>
    </ligand>
</feature>
<feature type="binding site" evidence="1">
    <location>
        <position position="281"/>
    </location>
    <ligand>
        <name>ATP</name>
        <dbReference type="ChEBI" id="CHEBI:30616"/>
    </ligand>
</feature>